<dbReference type="EMBL" id="GU396193">
    <property type="protein sequence ID" value="ADE43083.1"/>
    <property type="molecule type" value="Genomic_DNA"/>
</dbReference>
<dbReference type="EMBL" id="FR682056">
    <property type="protein sequence ID" value="CBW45867.1"/>
    <property type="molecule type" value="Genomic_DNA"/>
</dbReference>
<dbReference type="SMR" id="D5K211"/>
<dbReference type="ExpressionAtlas" id="D5K211">
    <property type="expression patterns" value="baseline and differential"/>
</dbReference>
<dbReference type="GO" id="GO:0005886">
    <property type="term" value="C:plasma membrane"/>
    <property type="evidence" value="ECO:0007669"/>
    <property type="project" value="UniProtKB-SubCell"/>
</dbReference>
<dbReference type="GO" id="GO:0006952">
    <property type="term" value="P:defense response"/>
    <property type="evidence" value="ECO:0007669"/>
    <property type="project" value="UniProtKB-KW"/>
</dbReference>
<dbReference type="CDD" id="cd06464">
    <property type="entry name" value="ACD_sHsps-like"/>
    <property type="match status" value="1"/>
</dbReference>
<dbReference type="Gene3D" id="2.60.40.790">
    <property type="match status" value="1"/>
</dbReference>
<dbReference type="InterPro" id="IPR002068">
    <property type="entry name" value="A-crystallin/Hsp20_dom"/>
</dbReference>
<dbReference type="InterPro" id="IPR008978">
    <property type="entry name" value="HSP20-like_chaperone"/>
</dbReference>
<dbReference type="PANTHER" id="PTHR43670">
    <property type="entry name" value="HEAT SHOCK PROTEIN 26"/>
    <property type="match status" value="1"/>
</dbReference>
<dbReference type="PANTHER" id="PTHR43670:SF121">
    <property type="entry name" value="PROTEIN RESTRICTED TEV MOVEMENT 2"/>
    <property type="match status" value="1"/>
</dbReference>
<dbReference type="Pfam" id="PF00011">
    <property type="entry name" value="HSP20"/>
    <property type="match status" value="1"/>
</dbReference>
<dbReference type="SUPFAM" id="SSF49764">
    <property type="entry name" value="HSP20-like chaperones"/>
    <property type="match status" value="1"/>
</dbReference>
<dbReference type="PROSITE" id="PS01031">
    <property type="entry name" value="SHSP"/>
    <property type="match status" value="1"/>
</dbReference>
<sequence>MAARQQQKGTGFGVQYEDFVPKSEWKDQPEATILNIDLTGFAKEQMKVTYVHSSKMIRVTGERPLANRKWNRFNEVFTVPQNCLVDKIHGSFKNNVLTITMPKETITKVAYLPETSRTEAAALEKAAKLEEKRLLEESRRKEKEEEEAKQMKKQLLEEKEALIRKLQEEAKAKEEAEMRKLQEEAKANEEAAAKKLQEEIEAKEKLEERKLEERRLEERKLEDMKLAEEAKLKKIQERKSVDESGEKEKILKPEVVYTKSGHVATPKPESGSGLKSGFGGVGEVVKLAEEKLGNLVEKEKKMGKGIMEKIRRKEITSEEKKLMMNVGVAALVIFALGAYVSYTFCSSSSSSSSSSPSSSSSSTKPE</sequence>
<gene>
    <name type="primary">RTM2</name>
</gene>
<comment type="function">
    <text evidence="1 5 6">Seems to not be involved in heat resistance (By similarity). Unable to mediate restriction of long-distance movement of the pathogenic tobacco etch virus (TEV) without causing a hypersensitive response or inducing systemic acquired resistance.</text>
</comment>
<comment type="subcellular location">
    <subcellularLocation>
        <location evidence="1">Cell membrane</location>
        <topology evidence="1">Single-pass membrane protein</topology>
    </subcellularLocation>
    <text evidence="1">Present in sieve elements.</text>
</comment>
<comment type="similarity">
    <text evidence="3">Belongs to the small heat shock protein (HSP20) family.</text>
</comment>
<comment type="caution">
    <text evidence="7">Has been shown to be active in cv. Columbia (AC Q9M670) due to naturally occurring sequence variation in this strain. The sequence shown is from strains cv. Ct-1 and cv. Ga-0.</text>
</comment>
<reference key="1">
    <citation type="journal article" date="2010" name="Philos. Trans. R. Soc. Lond., B, Biol. Sci.">
        <title>Adaptation of tobacco etch potyvirus to a susceptible ecotype of Arabidopsis thaliana capacitates it for systemic infection of resistant ecotypes.</title>
        <authorList>
            <person name="Lalic J."/>
            <person name="Agudelo-Romero P."/>
            <person name="Carrasco P."/>
            <person name="Elena S.F."/>
        </authorList>
    </citation>
    <scope>NUCLEOTIDE SEQUENCE [GENOMIC DNA]</scope>
    <scope>FUNCTION</scope>
    <source>
        <strain>cv. Ga-0</strain>
    </source>
</reference>
<reference key="2">
    <citation type="journal article" date="2012" name="PLoS ONE">
        <title>The RTM resistance to potyviruses in Arabidopsis thaliana: natural variation of the RTM genes and evidence for the implication of additional genes.</title>
        <authorList>
            <person name="Cosson P."/>
            <person name="Schurdi-Levraud V."/>
            <person name="Le Q.H."/>
            <person name="Sicard O."/>
            <person name="Caballero M."/>
            <person name="Roux F."/>
            <person name="Le Gall O."/>
            <person name="Candresse T."/>
            <person name="Revers F."/>
        </authorList>
    </citation>
    <scope>NUCLEOTIDE SEQUENCE [GENOMIC DNA]</scope>
    <scope>FUNCTION</scope>
    <source>
        <strain>cv. Ct-1</strain>
        <tissue>Leaf</tissue>
    </source>
</reference>
<organism>
    <name type="scientific">Arabidopsis thaliana</name>
    <name type="common">Mouse-ear cress</name>
    <dbReference type="NCBI Taxonomy" id="3702"/>
    <lineage>
        <taxon>Eukaryota</taxon>
        <taxon>Viridiplantae</taxon>
        <taxon>Streptophyta</taxon>
        <taxon>Embryophyta</taxon>
        <taxon>Tracheophyta</taxon>
        <taxon>Spermatophyta</taxon>
        <taxon>Magnoliopsida</taxon>
        <taxon>eudicotyledons</taxon>
        <taxon>Gunneridae</taxon>
        <taxon>Pentapetalae</taxon>
        <taxon>rosids</taxon>
        <taxon>malvids</taxon>
        <taxon>Brassicales</taxon>
        <taxon>Brassicaceae</taxon>
        <taxon>Camelineae</taxon>
        <taxon>Arabidopsis</taxon>
    </lineage>
</organism>
<protein>
    <recommendedName>
        <fullName>Inactive protein RESTRICTED TEV MOVEMENT 2</fullName>
    </recommendedName>
    <alternativeName>
        <fullName>Inactive restricted tobacco etch virus movement protein 2</fullName>
    </alternativeName>
</protein>
<proteinExistence type="inferred from homology"/>
<evidence type="ECO:0000250" key="1"/>
<evidence type="ECO:0000255" key="2"/>
<evidence type="ECO:0000255" key="3">
    <source>
        <dbReference type="PROSITE-ProRule" id="PRU00285"/>
    </source>
</evidence>
<evidence type="ECO:0000256" key="4">
    <source>
        <dbReference type="SAM" id="MobiDB-lite"/>
    </source>
</evidence>
<evidence type="ECO:0000269" key="5">
    <source>
    </source>
</evidence>
<evidence type="ECO:0000269" key="6">
    <source>
    </source>
</evidence>
<evidence type="ECO:0000305" key="7"/>
<accession>D5K211</accession>
<name>RTM2A_ARATH</name>
<feature type="chain" id="PRO_0000429166" description="Inactive protein RESTRICTED TEV MOVEMENT 2">
    <location>
        <begin position="1"/>
        <end position="366"/>
    </location>
</feature>
<feature type="transmembrane region" description="Helical" evidence="2">
    <location>
        <begin position="322"/>
        <end position="342"/>
    </location>
</feature>
<feature type="domain" description="sHSP" evidence="3">
    <location>
        <begin position="14"/>
        <end position="121"/>
    </location>
</feature>
<feature type="repeat" description="A-1">
    <location>
        <begin position="129"/>
        <end position="133"/>
    </location>
</feature>
<feature type="repeat" description="A-2">
    <location>
        <begin position="135"/>
        <end position="139"/>
    </location>
</feature>
<feature type="repeat" description="A-3">
    <location>
        <begin position="156"/>
        <end position="160"/>
    </location>
</feature>
<feature type="repeat" description="B-1">
    <location>
        <begin position="163"/>
        <end position="176"/>
    </location>
</feature>
<feature type="repeat" description="B-2">
    <location>
        <begin position="178"/>
        <end position="191"/>
    </location>
</feature>
<feature type="repeat" description="B-3">
    <location>
        <begin position="193"/>
        <end position="205"/>
    </location>
</feature>
<feature type="repeat" description="A-4">
    <location>
        <begin position="206"/>
        <end position="210"/>
    </location>
</feature>
<feature type="repeat" description="A-5">
    <location>
        <begin position="211"/>
        <end position="215"/>
    </location>
</feature>
<feature type="repeat" description="A-6">
    <location>
        <begin position="216"/>
        <end position="220"/>
    </location>
</feature>
<feature type="region of interest" description="6 X 5 AA repeats A of L-E-E-[SKR]-[ERK]">
    <location>
        <begin position="129"/>
        <end position="220"/>
    </location>
</feature>
<feature type="region of interest" description="3 X 14 AA repeats B of [IMA]-[RK]-K-L-Q-E-E-A-K-A-K-E-[EK]-[LA]">
    <location>
        <begin position="163"/>
        <end position="206"/>
    </location>
</feature>
<feature type="region of interest" description="Disordered" evidence="4">
    <location>
        <begin position="345"/>
        <end position="366"/>
    </location>
</feature>
<feature type="compositionally biased region" description="Low complexity" evidence="4">
    <location>
        <begin position="346"/>
        <end position="366"/>
    </location>
</feature>
<keyword id="KW-1003">Cell membrane</keyword>
<keyword id="KW-0472">Membrane</keyword>
<keyword id="KW-0611">Plant defense</keyword>
<keyword id="KW-0677">Repeat</keyword>
<keyword id="KW-0812">Transmembrane</keyword>
<keyword id="KW-1133">Transmembrane helix</keyword>